<comment type="function">
    <text evidence="2">Catalyzes the formation of N(7)-methylguanine at position 46 (m7G46) in tRNA.</text>
</comment>
<comment type="catalytic activity">
    <reaction evidence="2">
        <text>guanosine(46) in tRNA + S-adenosyl-L-methionine = N(7)-methylguanosine(46) in tRNA + S-adenosyl-L-homocysteine</text>
        <dbReference type="Rhea" id="RHEA:42708"/>
        <dbReference type="Rhea" id="RHEA-COMP:10188"/>
        <dbReference type="Rhea" id="RHEA-COMP:10189"/>
        <dbReference type="ChEBI" id="CHEBI:57856"/>
        <dbReference type="ChEBI" id="CHEBI:59789"/>
        <dbReference type="ChEBI" id="CHEBI:74269"/>
        <dbReference type="ChEBI" id="CHEBI:74480"/>
        <dbReference type="EC" id="2.1.1.33"/>
    </reaction>
</comment>
<comment type="pathway">
    <text evidence="2">tRNA modification; N(7)-methylguanine-tRNA biosynthesis.</text>
</comment>
<comment type="subunit">
    <text evidence="2">Monomer.</text>
</comment>
<comment type="similarity">
    <text evidence="2">Belongs to the class I-like SAM-binding methyltransferase superfamily. TrmB family.</text>
</comment>
<dbReference type="EC" id="2.1.1.33" evidence="2"/>
<dbReference type="EMBL" id="CP000026">
    <property type="protein sequence ID" value="AAV78810.1"/>
    <property type="molecule type" value="Genomic_DNA"/>
</dbReference>
<dbReference type="RefSeq" id="WP_000786896.1">
    <property type="nucleotide sequence ID" value="NC_006511.1"/>
</dbReference>
<dbReference type="SMR" id="Q5PMK3"/>
<dbReference type="KEGG" id="spt:SPA2972"/>
<dbReference type="HOGENOM" id="CLU_050910_0_1_6"/>
<dbReference type="UniPathway" id="UPA00989"/>
<dbReference type="Proteomes" id="UP000008185">
    <property type="component" value="Chromosome"/>
</dbReference>
<dbReference type="GO" id="GO:0043527">
    <property type="term" value="C:tRNA methyltransferase complex"/>
    <property type="evidence" value="ECO:0007669"/>
    <property type="project" value="TreeGrafter"/>
</dbReference>
<dbReference type="GO" id="GO:0008176">
    <property type="term" value="F:tRNA (guanine(46)-N7)-methyltransferase activity"/>
    <property type="evidence" value="ECO:0007669"/>
    <property type="project" value="UniProtKB-UniRule"/>
</dbReference>
<dbReference type="FunFam" id="3.40.50.150:FF:000024">
    <property type="entry name" value="tRNA (guanine-N(7)-)-methyltransferase"/>
    <property type="match status" value="1"/>
</dbReference>
<dbReference type="Gene3D" id="3.40.50.150">
    <property type="entry name" value="Vaccinia Virus protein VP39"/>
    <property type="match status" value="1"/>
</dbReference>
<dbReference type="HAMAP" id="MF_01057">
    <property type="entry name" value="tRNA_methyltr_TrmB"/>
    <property type="match status" value="1"/>
</dbReference>
<dbReference type="InterPro" id="IPR029063">
    <property type="entry name" value="SAM-dependent_MTases_sf"/>
</dbReference>
<dbReference type="InterPro" id="IPR003358">
    <property type="entry name" value="tRNA_(Gua-N-7)_MeTrfase_Trmb"/>
</dbReference>
<dbReference type="InterPro" id="IPR055361">
    <property type="entry name" value="tRNA_methyltr_TrmB_bact"/>
</dbReference>
<dbReference type="NCBIfam" id="TIGR00091">
    <property type="entry name" value="tRNA (guanosine(46)-N7)-methyltransferase TrmB"/>
    <property type="match status" value="1"/>
</dbReference>
<dbReference type="PANTHER" id="PTHR23417">
    <property type="entry name" value="3-DEOXY-D-MANNO-OCTULOSONIC-ACID TRANSFERASE/TRNA GUANINE-N 7 - -METHYLTRANSFERASE"/>
    <property type="match status" value="1"/>
</dbReference>
<dbReference type="PANTHER" id="PTHR23417:SF14">
    <property type="entry name" value="PENTACOTRIPEPTIDE-REPEAT REGION OF PRORP DOMAIN-CONTAINING PROTEIN"/>
    <property type="match status" value="1"/>
</dbReference>
<dbReference type="Pfam" id="PF02390">
    <property type="entry name" value="Methyltransf_4"/>
    <property type="match status" value="1"/>
</dbReference>
<dbReference type="SUPFAM" id="SSF53335">
    <property type="entry name" value="S-adenosyl-L-methionine-dependent methyltransferases"/>
    <property type="match status" value="1"/>
</dbReference>
<dbReference type="PROSITE" id="PS51625">
    <property type="entry name" value="SAM_MT_TRMB"/>
    <property type="match status" value="1"/>
</dbReference>
<feature type="chain" id="PRO_0000229194" description="tRNA (guanine-N(7)-)-methyltransferase">
    <location>
        <begin position="1"/>
        <end position="239"/>
    </location>
</feature>
<feature type="region of interest" description="Interaction with RNA" evidence="2">
    <location>
        <begin position="150"/>
        <end position="155"/>
    </location>
</feature>
<feature type="active site" evidence="1">
    <location>
        <position position="144"/>
    </location>
</feature>
<feature type="binding site" evidence="2">
    <location>
        <position position="69"/>
    </location>
    <ligand>
        <name>S-adenosyl-L-methionine</name>
        <dbReference type="ChEBI" id="CHEBI:59789"/>
    </ligand>
</feature>
<feature type="binding site" evidence="2">
    <location>
        <position position="94"/>
    </location>
    <ligand>
        <name>S-adenosyl-L-methionine</name>
        <dbReference type="ChEBI" id="CHEBI:59789"/>
    </ligand>
</feature>
<feature type="binding site" evidence="2">
    <location>
        <position position="121"/>
    </location>
    <ligand>
        <name>S-adenosyl-L-methionine</name>
        <dbReference type="ChEBI" id="CHEBI:59789"/>
    </ligand>
</feature>
<feature type="binding site" evidence="2">
    <location>
        <position position="144"/>
    </location>
    <ligand>
        <name>S-adenosyl-L-methionine</name>
        <dbReference type="ChEBI" id="CHEBI:59789"/>
    </ligand>
</feature>
<feature type="binding site" evidence="2">
    <location>
        <position position="148"/>
    </location>
    <ligand>
        <name>substrate</name>
    </ligand>
</feature>
<feature type="binding site" evidence="2">
    <location>
        <position position="180"/>
    </location>
    <ligand>
        <name>substrate</name>
    </ligand>
</feature>
<feature type="binding site" evidence="2">
    <location>
        <begin position="217"/>
        <end position="220"/>
    </location>
    <ligand>
        <name>substrate</name>
    </ligand>
</feature>
<gene>
    <name evidence="2" type="primary">trmB</name>
    <name type="ordered locus">SPA2972</name>
</gene>
<proteinExistence type="inferred from homology"/>
<name>TRMB_SALPA</name>
<reference key="1">
    <citation type="journal article" date="2004" name="Nat. Genet.">
        <title>Comparison of genome degradation in Paratyphi A and Typhi, human-restricted serovars of Salmonella enterica that cause typhoid.</title>
        <authorList>
            <person name="McClelland M."/>
            <person name="Sanderson K.E."/>
            <person name="Clifton S.W."/>
            <person name="Latreille P."/>
            <person name="Porwollik S."/>
            <person name="Sabo A."/>
            <person name="Meyer R."/>
            <person name="Bieri T."/>
            <person name="Ozersky P."/>
            <person name="McLellan M."/>
            <person name="Harkins C.R."/>
            <person name="Wang C."/>
            <person name="Nguyen C."/>
            <person name="Berghoff A."/>
            <person name="Elliott G."/>
            <person name="Kohlberg S."/>
            <person name="Strong C."/>
            <person name="Du F."/>
            <person name="Carter J."/>
            <person name="Kremizki C."/>
            <person name="Layman D."/>
            <person name="Leonard S."/>
            <person name="Sun H."/>
            <person name="Fulton L."/>
            <person name="Nash W."/>
            <person name="Miner T."/>
            <person name="Minx P."/>
            <person name="Delehaunty K."/>
            <person name="Fronick C."/>
            <person name="Magrini V."/>
            <person name="Nhan M."/>
            <person name="Warren W."/>
            <person name="Florea L."/>
            <person name="Spieth J."/>
            <person name="Wilson R.K."/>
        </authorList>
    </citation>
    <scope>NUCLEOTIDE SEQUENCE [LARGE SCALE GENOMIC DNA]</scope>
    <source>
        <strain>ATCC 9150 / SARB42</strain>
    </source>
</reference>
<sequence length="239" mass="27178">MKNDVISPEFDENGRPLRRIRSFVRRQGRLTKGQEHALENYWPVMGVEFSEAPVDFATLFGREAPVTLEIGFGMGASLVAMVKARPEQNFLGIEVHSPGVGACLASAHEEGVENLRVMCHDAVEVLHKMIPDNSLSMVQLFFPDPWHKARHNKRRIVQVPFAELVLSKLKLGGVFHMATDWEAYAEHMLEVMSSIDGYKNLSESNDYVPRPESRPVTKFEQRGHRLGHGVWDLMFERVK</sequence>
<organism>
    <name type="scientific">Salmonella paratyphi A (strain ATCC 9150 / SARB42)</name>
    <dbReference type="NCBI Taxonomy" id="295319"/>
    <lineage>
        <taxon>Bacteria</taxon>
        <taxon>Pseudomonadati</taxon>
        <taxon>Pseudomonadota</taxon>
        <taxon>Gammaproteobacteria</taxon>
        <taxon>Enterobacterales</taxon>
        <taxon>Enterobacteriaceae</taxon>
        <taxon>Salmonella</taxon>
    </lineage>
</organism>
<keyword id="KW-0489">Methyltransferase</keyword>
<keyword id="KW-0949">S-adenosyl-L-methionine</keyword>
<keyword id="KW-0808">Transferase</keyword>
<keyword id="KW-0819">tRNA processing</keyword>
<protein>
    <recommendedName>
        <fullName evidence="2">tRNA (guanine-N(7)-)-methyltransferase</fullName>
        <ecNumber evidence="2">2.1.1.33</ecNumber>
    </recommendedName>
    <alternativeName>
        <fullName evidence="2">tRNA (guanine(46)-N(7))-methyltransferase</fullName>
    </alternativeName>
    <alternativeName>
        <fullName evidence="2">tRNA(m7G46)-methyltransferase</fullName>
    </alternativeName>
</protein>
<accession>Q5PMK3</accession>
<evidence type="ECO:0000250" key="1"/>
<evidence type="ECO:0000255" key="2">
    <source>
        <dbReference type="HAMAP-Rule" id="MF_01057"/>
    </source>
</evidence>